<keyword id="KW-0963">Cytoplasm</keyword>
<keyword id="KW-0489">Methyltransferase</keyword>
<keyword id="KW-0698">rRNA processing</keyword>
<keyword id="KW-0949">S-adenosyl-L-methionine</keyword>
<keyword id="KW-0808">Transferase</keyword>
<organism>
    <name type="scientific">Bacillus cereus (strain ZK / E33L)</name>
    <dbReference type="NCBI Taxonomy" id="288681"/>
    <lineage>
        <taxon>Bacteria</taxon>
        <taxon>Bacillati</taxon>
        <taxon>Bacillota</taxon>
        <taxon>Bacilli</taxon>
        <taxon>Bacillales</taxon>
        <taxon>Bacillaceae</taxon>
        <taxon>Bacillus</taxon>
        <taxon>Bacillus cereus group</taxon>
    </lineage>
</organism>
<reference key="1">
    <citation type="journal article" date="2006" name="J. Bacteriol.">
        <title>Pathogenomic sequence analysis of Bacillus cereus and Bacillus thuringiensis isolates closely related to Bacillus anthracis.</title>
        <authorList>
            <person name="Han C.S."/>
            <person name="Xie G."/>
            <person name="Challacombe J.F."/>
            <person name="Altherr M.R."/>
            <person name="Bhotika S.S."/>
            <person name="Bruce D."/>
            <person name="Campbell C.S."/>
            <person name="Campbell M.L."/>
            <person name="Chen J."/>
            <person name="Chertkov O."/>
            <person name="Cleland C."/>
            <person name="Dimitrijevic M."/>
            <person name="Doggett N.A."/>
            <person name="Fawcett J.J."/>
            <person name="Glavina T."/>
            <person name="Goodwin L.A."/>
            <person name="Hill K.K."/>
            <person name="Hitchcock P."/>
            <person name="Jackson P.J."/>
            <person name="Keim P."/>
            <person name="Kewalramani A.R."/>
            <person name="Longmire J."/>
            <person name="Lucas S."/>
            <person name="Malfatti S."/>
            <person name="McMurry K."/>
            <person name="Meincke L.J."/>
            <person name="Misra M."/>
            <person name="Moseman B.L."/>
            <person name="Mundt M."/>
            <person name="Munk A.C."/>
            <person name="Okinaka R.T."/>
            <person name="Parson-Quintana B."/>
            <person name="Reilly L.P."/>
            <person name="Richardson P."/>
            <person name="Robinson D.L."/>
            <person name="Rubin E."/>
            <person name="Saunders E."/>
            <person name="Tapia R."/>
            <person name="Tesmer J.G."/>
            <person name="Thayer N."/>
            <person name="Thompson L.S."/>
            <person name="Tice H."/>
            <person name="Ticknor L.O."/>
            <person name="Wills P.L."/>
            <person name="Brettin T.S."/>
            <person name="Gilna P."/>
        </authorList>
    </citation>
    <scope>NUCLEOTIDE SEQUENCE [LARGE SCALE GENOMIC DNA]</scope>
    <source>
        <strain>ZK / E33L</strain>
    </source>
</reference>
<protein>
    <recommendedName>
        <fullName evidence="1">Ribosomal RNA large subunit methyltransferase H</fullName>
        <ecNumber evidence="1">2.1.1.177</ecNumber>
    </recommendedName>
    <alternativeName>
        <fullName evidence="1">23S rRNA (pseudouridine1915-N3)-methyltransferase</fullName>
    </alternativeName>
    <alternativeName>
        <fullName evidence="1">23S rRNA m3Psi1915 methyltransferase</fullName>
    </alternativeName>
    <alternativeName>
        <fullName evidence="1">rRNA (pseudouridine-N3-)-methyltransferase RlmH</fullName>
    </alternativeName>
</protein>
<dbReference type="EC" id="2.1.1.177" evidence="1"/>
<dbReference type="EMBL" id="CP000001">
    <property type="protein sequence ID" value="AAU20286.1"/>
    <property type="status" value="ALT_INIT"/>
    <property type="molecule type" value="Genomic_DNA"/>
</dbReference>
<dbReference type="RefSeq" id="WP_001027003.1">
    <property type="nucleotide sequence ID" value="NZ_CP009968.1"/>
</dbReference>
<dbReference type="SMR" id="Q630E3"/>
<dbReference type="GeneID" id="93005667"/>
<dbReference type="KEGG" id="bcz:BCE33L5156"/>
<dbReference type="PATRIC" id="fig|288681.22.peg.185"/>
<dbReference type="Proteomes" id="UP000002612">
    <property type="component" value="Chromosome"/>
</dbReference>
<dbReference type="GO" id="GO:0005737">
    <property type="term" value="C:cytoplasm"/>
    <property type="evidence" value="ECO:0007669"/>
    <property type="project" value="UniProtKB-SubCell"/>
</dbReference>
<dbReference type="GO" id="GO:0070038">
    <property type="term" value="F:rRNA (pseudouridine-N3-)-methyltransferase activity"/>
    <property type="evidence" value="ECO:0007669"/>
    <property type="project" value="UniProtKB-UniRule"/>
</dbReference>
<dbReference type="CDD" id="cd18081">
    <property type="entry name" value="RlmH-like"/>
    <property type="match status" value="1"/>
</dbReference>
<dbReference type="Gene3D" id="3.40.1280.10">
    <property type="match status" value="1"/>
</dbReference>
<dbReference type="HAMAP" id="MF_00658">
    <property type="entry name" value="23SrRNA_methyltr_H"/>
    <property type="match status" value="1"/>
</dbReference>
<dbReference type="InterPro" id="IPR029028">
    <property type="entry name" value="Alpha/beta_knot_MTases"/>
</dbReference>
<dbReference type="InterPro" id="IPR003742">
    <property type="entry name" value="RlmH-like"/>
</dbReference>
<dbReference type="InterPro" id="IPR029026">
    <property type="entry name" value="tRNA_m1G_MTases_N"/>
</dbReference>
<dbReference type="NCBIfam" id="NF000985">
    <property type="entry name" value="PRK00103.1-3"/>
    <property type="match status" value="1"/>
</dbReference>
<dbReference type="NCBIfam" id="TIGR00246">
    <property type="entry name" value="tRNA_RlmH_YbeA"/>
    <property type="match status" value="1"/>
</dbReference>
<dbReference type="PANTHER" id="PTHR33603">
    <property type="entry name" value="METHYLTRANSFERASE"/>
    <property type="match status" value="1"/>
</dbReference>
<dbReference type="PANTHER" id="PTHR33603:SF1">
    <property type="entry name" value="RIBOSOMAL RNA LARGE SUBUNIT METHYLTRANSFERASE H"/>
    <property type="match status" value="1"/>
</dbReference>
<dbReference type="Pfam" id="PF02590">
    <property type="entry name" value="SPOUT_MTase"/>
    <property type="match status" value="1"/>
</dbReference>
<dbReference type="PIRSF" id="PIRSF004505">
    <property type="entry name" value="MT_bac"/>
    <property type="match status" value="1"/>
</dbReference>
<dbReference type="SUPFAM" id="SSF75217">
    <property type="entry name" value="alpha/beta knot"/>
    <property type="match status" value="1"/>
</dbReference>
<comment type="function">
    <text evidence="1">Specifically methylates the pseudouridine at position 1915 (m3Psi1915) in 23S rRNA.</text>
</comment>
<comment type="catalytic activity">
    <reaction evidence="1">
        <text>pseudouridine(1915) in 23S rRNA + S-adenosyl-L-methionine = N(3)-methylpseudouridine(1915) in 23S rRNA + S-adenosyl-L-homocysteine + H(+)</text>
        <dbReference type="Rhea" id="RHEA:42752"/>
        <dbReference type="Rhea" id="RHEA-COMP:10221"/>
        <dbReference type="Rhea" id="RHEA-COMP:10222"/>
        <dbReference type="ChEBI" id="CHEBI:15378"/>
        <dbReference type="ChEBI" id="CHEBI:57856"/>
        <dbReference type="ChEBI" id="CHEBI:59789"/>
        <dbReference type="ChEBI" id="CHEBI:65314"/>
        <dbReference type="ChEBI" id="CHEBI:74486"/>
        <dbReference type="EC" id="2.1.1.177"/>
    </reaction>
</comment>
<comment type="subunit">
    <text evidence="1">Homodimer.</text>
</comment>
<comment type="subcellular location">
    <subcellularLocation>
        <location evidence="1">Cytoplasm</location>
    </subcellularLocation>
</comment>
<comment type="similarity">
    <text evidence="1">Belongs to the RNA methyltransferase RlmH family.</text>
</comment>
<comment type="sequence caution" evidence="2">
    <conflict type="erroneous initiation">
        <sequence resource="EMBL-CDS" id="AAU20286"/>
    </conflict>
</comment>
<proteinExistence type="inferred from homology"/>
<sequence length="159" mass="17927">MNISIISIGKLKEKYLKQGIAEYLKRLSAYAKVEVIELPDEKAPENLSEAEMLIVKEKEGIRILDKISDDTHVIALAIEGKQKSSEEFAVSLDRLATYGKSKVAFVIGGSLGLSSEVMKRSNESLSFSKMTLPHQLMRLVLLEQVYRAFRINRGEPYHK</sequence>
<evidence type="ECO:0000255" key="1">
    <source>
        <dbReference type="HAMAP-Rule" id="MF_00658"/>
    </source>
</evidence>
<evidence type="ECO:0000305" key="2"/>
<accession>Q630E3</accession>
<feature type="chain" id="PRO_0000198083" description="Ribosomal RNA large subunit methyltransferase H">
    <location>
        <begin position="1"/>
        <end position="159"/>
    </location>
</feature>
<feature type="binding site" evidence="1">
    <location>
        <position position="76"/>
    </location>
    <ligand>
        <name>S-adenosyl-L-methionine</name>
        <dbReference type="ChEBI" id="CHEBI:59789"/>
    </ligand>
</feature>
<feature type="binding site" evidence="1">
    <location>
        <position position="108"/>
    </location>
    <ligand>
        <name>S-adenosyl-L-methionine</name>
        <dbReference type="ChEBI" id="CHEBI:59789"/>
    </ligand>
</feature>
<feature type="binding site" evidence="1">
    <location>
        <begin position="127"/>
        <end position="132"/>
    </location>
    <ligand>
        <name>S-adenosyl-L-methionine</name>
        <dbReference type="ChEBI" id="CHEBI:59789"/>
    </ligand>
</feature>
<name>RLMH_BACCZ</name>
<gene>
    <name evidence="1" type="primary">rlmH</name>
    <name type="ordered locus">BCE33L5156</name>
</gene>